<organism>
    <name type="scientific">Arabidopsis thaliana</name>
    <name type="common">Mouse-ear cress</name>
    <dbReference type="NCBI Taxonomy" id="3702"/>
    <lineage>
        <taxon>Eukaryota</taxon>
        <taxon>Viridiplantae</taxon>
        <taxon>Streptophyta</taxon>
        <taxon>Embryophyta</taxon>
        <taxon>Tracheophyta</taxon>
        <taxon>Spermatophyta</taxon>
        <taxon>Magnoliopsida</taxon>
        <taxon>eudicotyledons</taxon>
        <taxon>Gunneridae</taxon>
        <taxon>Pentapetalae</taxon>
        <taxon>rosids</taxon>
        <taxon>malvids</taxon>
        <taxon>Brassicales</taxon>
        <taxon>Brassicaceae</taxon>
        <taxon>Camelineae</taxon>
        <taxon>Arabidopsis</taxon>
    </lineage>
</organism>
<evidence type="ECO:0000255" key="1">
    <source>
        <dbReference type="PROSITE-ProRule" id="PRU00159"/>
    </source>
</evidence>
<evidence type="ECO:0000255" key="2">
    <source>
        <dbReference type="PROSITE-ProRule" id="PRU10027"/>
    </source>
</evidence>
<evidence type="ECO:0000256" key="3">
    <source>
        <dbReference type="SAM" id="MobiDB-lite"/>
    </source>
</evidence>
<comment type="catalytic activity">
    <reaction>
        <text>L-seryl-[protein] + ATP = O-phospho-L-seryl-[protein] + ADP + H(+)</text>
        <dbReference type="Rhea" id="RHEA:17989"/>
        <dbReference type="Rhea" id="RHEA-COMP:9863"/>
        <dbReference type="Rhea" id="RHEA-COMP:11604"/>
        <dbReference type="ChEBI" id="CHEBI:15378"/>
        <dbReference type="ChEBI" id="CHEBI:29999"/>
        <dbReference type="ChEBI" id="CHEBI:30616"/>
        <dbReference type="ChEBI" id="CHEBI:83421"/>
        <dbReference type="ChEBI" id="CHEBI:456216"/>
        <dbReference type="EC" id="2.7.11.1"/>
    </reaction>
</comment>
<comment type="catalytic activity">
    <reaction>
        <text>L-threonyl-[protein] + ATP = O-phospho-L-threonyl-[protein] + ADP + H(+)</text>
        <dbReference type="Rhea" id="RHEA:46608"/>
        <dbReference type="Rhea" id="RHEA-COMP:11060"/>
        <dbReference type="Rhea" id="RHEA-COMP:11605"/>
        <dbReference type="ChEBI" id="CHEBI:15378"/>
        <dbReference type="ChEBI" id="CHEBI:30013"/>
        <dbReference type="ChEBI" id="CHEBI:30616"/>
        <dbReference type="ChEBI" id="CHEBI:61977"/>
        <dbReference type="ChEBI" id="CHEBI:456216"/>
        <dbReference type="EC" id="2.7.11.1"/>
    </reaction>
</comment>
<comment type="interaction">
    <interactant intactId="EBI-1235713">
        <id>Q9ZVM9</id>
    </interactant>
    <interactant intactId="EBI-1235664">
        <id>P25854</id>
        <label>CAM4</label>
    </interactant>
    <organismsDiffer>false</organismsDiffer>
    <experiments>2</experiments>
</comment>
<comment type="interaction">
    <interactant intactId="EBI-1235713">
        <id>Q9ZVM9</id>
    </interactant>
    <interactant intactId="EBI-1236031">
        <id>P59220</id>
        <label>CAM7</label>
    </interactant>
    <organismsDiffer>false</organismsDiffer>
    <experiments>2</experiments>
</comment>
<comment type="alternative products">
    <event type="alternative splicing"/>
    <isoform>
        <id>Q9ZVM9-1</id>
        <name>1</name>
        <sequence type="displayed"/>
    </isoform>
    <text>A number of isoforms are produced. According to EST sequences.</text>
</comment>
<comment type="similarity">
    <text evidence="1">Belongs to the protein kinase superfamily. Ser/Thr protein kinase family.</text>
</comment>
<name>Y1461_ARATH</name>
<accession>Q9ZVM9</accession>
<accession>B3H626</accession>
<protein>
    <recommendedName>
        <fullName>Probable serine/threonine-protein kinase At1g54610</fullName>
        <ecNumber>2.7.11.1</ecNumber>
    </recommendedName>
</protein>
<reference key="1">
    <citation type="journal article" date="2000" name="Nature">
        <title>Sequence and analysis of chromosome 1 of the plant Arabidopsis thaliana.</title>
        <authorList>
            <person name="Theologis A."/>
            <person name="Ecker J.R."/>
            <person name="Palm C.J."/>
            <person name="Federspiel N.A."/>
            <person name="Kaul S."/>
            <person name="White O."/>
            <person name="Alonso J."/>
            <person name="Altafi H."/>
            <person name="Araujo R."/>
            <person name="Bowman C.L."/>
            <person name="Brooks S.Y."/>
            <person name="Buehler E."/>
            <person name="Chan A."/>
            <person name="Chao Q."/>
            <person name="Chen H."/>
            <person name="Cheuk R.F."/>
            <person name="Chin C.W."/>
            <person name="Chung M.K."/>
            <person name="Conn L."/>
            <person name="Conway A.B."/>
            <person name="Conway A.R."/>
            <person name="Creasy T.H."/>
            <person name="Dewar K."/>
            <person name="Dunn P."/>
            <person name="Etgu P."/>
            <person name="Feldblyum T.V."/>
            <person name="Feng J.-D."/>
            <person name="Fong B."/>
            <person name="Fujii C.Y."/>
            <person name="Gill J.E."/>
            <person name="Goldsmith A.D."/>
            <person name="Haas B."/>
            <person name="Hansen N.F."/>
            <person name="Hughes B."/>
            <person name="Huizar L."/>
            <person name="Hunter J.L."/>
            <person name="Jenkins J."/>
            <person name="Johnson-Hopson C."/>
            <person name="Khan S."/>
            <person name="Khaykin E."/>
            <person name="Kim C.J."/>
            <person name="Koo H.L."/>
            <person name="Kremenetskaia I."/>
            <person name="Kurtz D.B."/>
            <person name="Kwan A."/>
            <person name="Lam B."/>
            <person name="Langin-Hooper S."/>
            <person name="Lee A."/>
            <person name="Lee J.M."/>
            <person name="Lenz C.A."/>
            <person name="Li J.H."/>
            <person name="Li Y.-P."/>
            <person name="Lin X."/>
            <person name="Liu S.X."/>
            <person name="Liu Z.A."/>
            <person name="Luros J.S."/>
            <person name="Maiti R."/>
            <person name="Marziali A."/>
            <person name="Militscher J."/>
            <person name="Miranda M."/>
            <person name="Nguyen M."/>
            <person name="Nierman W.C."/>
            <person name="Osborne B.I."/>
            <person name="Pai G."/>
            <person name="Peterson J."/>
            <person name="Pham P.K."/>
            <person name="Rizzo M."/>
            <person name="Rooney T."/>
            <person name="Rowley D."/>
            <person name="Sakano H."/>
            <person name="Salzberg S.L."/>
            <person name="Schwartz J.R."/>
            <person name="Shinn P."/>
            <person name="Southwick A.M."/>
            <person name="Sun H."/>
            <person name="Tallon L.J."/>
            <person name="Tambunga G."/>
            <person name="Toriumi M.J."/>
            <person name="Town C.D."/>
            <person name="Utterback T."/>
            <person name="Van Aken S."/>
            <person name="Vaysberg M."/>
            <person name="Vysotskaia V.S."/>
            <person name="Walker M."/>
            <person name="Wu D."/>
            <person name="Yu G."/>
            <person name="Fraser C.M."/>
            <person name="Venter J.C."/>
            <person name="Davis R.W."/>
        </authorList>
    </citation>
    <scope>NUCLEOTIDE SEQUENCE [LARGE SCALE GENOMIC DNA]</scope>
    <source>
        <strain>cv. Columbia</strain>
    </source>
</reference>
<reference key="2">
    <citation type="journal article" date="2017" name="Plant J.">
        <title>Araport11: a complete reannotation of the Arabidopsis thaliana reference genome.</title>
        <authorList>
            <person name="Cheng C.Y."/>
            <person name="Krishnakumar V."/>
            <person name="Chan A.P."/>
            <person name="Thibaud-Nissen F."/>
            <person name="Schobel S."/>
            <person name="Town C.D."/>
        </authorList>
    </citation>
    <scope>GENOME REANNOTATION</scope>
    <source>
        <strain>cv. Columbia</strain>
    </source>
</reference>
<reference key="3">
    <citation type="journal article" date="2003" name="Science">
        <title>Empirical analysis of transcriptional activity in the Arabidopsis genome.</title>
        <authorList>
            <person name="Yamada K."/>
            <person name="Lim J."/>
            <person name="Dale J.M."/>
            <person name="Chen H."/>
            <person name="Shinn P."/>
            <person name="Palm C.J."/>
            <person name="Southwick A.M."/>
            <person name="Wu H.C."/>
            <person name="Kim C.J."/>
            <person name="Nguyen M."/>
            <person name="Pham P.K."/>
            <person name="Cheuk R.F."/>
            <person name="Karlin-Newmann G."/>
            <person name="Liu S.X."/>
            <person name="Lam B."/>
            <person name="Sakano H."/>
            <person name="Wu T."/>
            <person name="Yu G."/>
            <person name="Miranda M."/>
            <person name="Quach H.L."/>
            <person name="Tripp M."/>
            <person name="Chang C.H."/>
            <person name="Lee J.M."/>
            <person name="Toriumi M.J."/>
            <person name="Chan M.M."/>
            <person name="Tang C.C."/>
            <person name="Onodera C.S."/>
            <person name="Deng J.M."/>
            <person name="Akiyama K."/>
            <person name="Ansari Y."/>
            <person name="Arakawa T."/>
            <person name="Banh J."/>
            <person name="Banno F."/>
            <person name="Bowser L."/>
            <person name="Brooks S.Y."/>
            <person name="Carninci P."/>
            <person name="Chao Q."/>
            <person name="Choy N."/>
            <person name="Enju A."/>
            <person name="Goldsmith A.D."/>
            <person name="Gurjal M."/>
            <person name="Hansen N.F."/>
            <person name="Hayashizaki Y."/>
            <person name="Johnson-Hopson C."/>
            <person name="Hsuan V.W."/>
            <person name="Iida K."/>
            <person name="Karnes M."/>
            <person name="Khan S."/>
            <person name="Koesema E."/>
            <person name="Ishida J."/>
            <person name="Jiang P.X."/>
            <person name="Jones T."/>
            <person name="Kawai J."/>
            <person name="Kamiya A."/>
            <person name="Meyers C."/>
            <person name="Nakajima M."/>
            <person name="Narusaka M."/>
            <person name="Seki M."/>
            <person name="Sakurai T."/>
            <person name="Satou M."/>
            <person name="Tamse R."/>
            <person name="Vaysberg M."/>
            <person name="Wallender E.K."/>
            <person name="Wong C."/>
            <person name="Yamamura Y."/>
            <person name="Yuan S."/>
            <person name="Shinozaki K."/>
            <person name="Davis R.W."/>
            <person name="Theologis A."/>
            <person name="Ecker J.R."/>
        </authorList>
    </citation>
    <scope>NUCLEOTIDE SEQUENCE [LARGE SCALE MRNA]</scope>
    <source>
        <strain>cv. Columbia</strain>
    </source>
</reference>
<reference key="4">
    <citation type="journal article" date="2009" name="Plant Physiol.">
        <title>Large-scale Arabidopsis phosphoproteome profiling reveals novel chloroplast kinase substrates and phosphorylation networks.</title>
        <authorList>
            <person name="Reiland S."/>
            <person name="Messerli G."/>
            <person name="Baerenfaller K."/>
            <person name="Gerrits B."/>
            <person name="Endler A."/>
            <person name="Grossmann J."/>
            <person name="Gruissem W."/>
            <person name="Baginsky S."/>
        </authorList>
    </citation>
    <scope>IDENTIFICATION BY MASS SPECTROMETRY [LARGE SCALE ANALYSIS]</scope>
</reference>
<feature type="chain" id="PRO_0000305183" description="Probable serine/threonine-protein kinase At1g54610">
    <location>
        <begin position="1"/>
        <end position="572"/>
    </location>
</feature>
<feature type="domain" description="Protein kinase" evidence="1">
    <location>
        <begin position="118"/>
        <end position="402"/>
    </location>
</feature>
<feature type="region of interest" description="Disordered" evidence="3">
    <location>
        <begin position="1"/>
        <end position="89"/>
    </location>
</feature>
<feature type="region of interest" description="Disordered" evidence="3">
    <location>
        <begin position="409"/>
        <end position="474"/>
    </location>
</feature>
<feature type="region of interest" description="Disordered" evidence="3">
    <location>
        <begin position="526"/>
        <end position="572"/>
    </location>
</feature>
<feature type="compositionally biased region" description="Low complexity" evidence="3">
    <location>
        <begin position="9"/>
        <end position="40"/>
    </location>
</feature>
<feature type="compositionally biased region" description="Basic and acidic residues" evidence="3">
    <location>
        <begin position="47"/>
        <end position="67"/>
    </location>
</feature>
<feature type="compositionally biased region" description="Polar residues" evidence="3">
    <location>
        <begin position="74"/>
        <end position="83"/>
    </location>
</feature>
<feature type="compositionally biased region" description="Basic and acidic residues" evidence="3">
    <location>
        <begin position="419"/>
        <end position="434"/>
    </location>
</feature>
<feature type="compositionally biased region" description="Basic residues" evidence="3">
    <location>
        <begin position="554"/>
        <end position="572"/>
    </location>
</feature>
<feature type="active site" description="Proton acceptor" evidence="1 2">
    <location>
        <position position="242"/>
    </location>
</feature>
<feature type="binding site" evidence="1">
    <location>
        <begin position="124"/>
        <end position="132"/>
    </location>
    <ligand>
        <name>ATP</name>
        <dbReference type="ChEBI" id="CHEBI:30616"/>
    </ligand>
</feature>
<feature type="binding site" evidence="1">
    <location>
        <position position="147"/>
    </location>
    <ligand>
        <name>ATP</name>
        <dbReference type="ChEBI" id="CHEBI:30616"/>
    </ligand>
</feature>
<keyword id="KW-0025">Alternative splicing</keyword>
<keyword id="KW-0067">ATP-binding</keyword>
<keyword id="KW-0418">Kinase</keyword>
<keyword id="KW-0547">Nucleotide-binding</keyword>
<keyword id="KW-1185">Reference proteome</keyword>
<keyword id="KW-0723">Serine/threonine-protein kinase</keyword>
<keyword id="KW-0808">Transferase</keyword>
<dbReference type="EC" id="2.7.11.1"/>
<dbReference type="EMBL" id="AC005388">
    <property type="protein sequence ID" value="AAC64876.1"/>
    <property type="molecule type" value="Genomic_DNA"/>
</dbReference>
<dbReference type="EMBL" id="CP002684">
    <property type="protein sequence ID" value="AEE33123.1"/>
    <property type="molecule type" value="Genomic_DNA"/>
</dbReference>
<dbReference type="EMBL" id="CP002684">
    <property type="protein sequence ID" value="AEE33124.2"/>
    <property type="molecule type" value="Genomic_DNA"/>
</dbReference>
<dbReference type="EMBL" id="CP002684">
    <property type="protein sequence ID" value="AEE33125.1"/>
    <property type="molecule type" value="Genomic_DNA"/>
</dbReference>
<dbReference type="EMBL" id="AF370510">
    <property type="protein sequence ID" value="AAK43887.1"/>
    <property type="molecule type" value="mRNA"/>
</dbReference>
<dbReference type="EMBL" id="AY128918">
    <property type="protein sequence ID" value="AAM91318.1"/>
    <property type="molecule type" value="mRNA"/>
</dbReference>
<dbReference type="PIR" id="B96588">
    <property type="entry name" value="B96588"/>
</dbReference>
<dbReference type="RefSeq" id="NP_001117490.1">
    <molecule id="Q9ZVM9-1"/>
    <property type="nucleotide sequence ID" value="NM_001124018.1"/>
</dbReference>
<dbReference type="RefSeq" id="NP_001319227.1">
    <molecule id="Q9ZVM9-1"/>
    <property type="nucleotide sequence ID" value="NM_001333657.1"/>
</dbReference>
<dbReference type="RefSeq" id="NP_175862.1">
    <molecule id="Q9ZVM9-1"/>
    <property type="nucleotide sequence ID" value="NM_104338.7"/>
</dbReference>
<dbReference type="SMR" id="Q9ZVM9"/>
<dbReference type="BioGRID" id="27128">
    <property type="interactions" value="6"/>
</dbReference>
<dbReference type="FunCoup" id="Q9ZVM9">
    <property type="interactions" value="3107"/>
</dbReference>
<dbReference type="IntAct" id="Q9ZVM9">
    <property type="interactions" value="8"/>
</dbReference>
<dbReference type="STRING" id="3702.Q9ZVM9"/>
<dbReference type="iPTMnet" id="Q9ZVM9"/>
<dbReference type="SwissPalm" id="Q9ZVM9"/>
<dbReference type="PaxDb" id="3702-AT1G54610.2"/>
<dbReference type="ProteomicsDB" id="242389">
    <molecule id="Q9ZVM9-1"/>
</dbReference>
<dbReference type="EnsemblPlants" id="AT1G54610.1">
    <molecule id="Q9ZVM9-1"/>
    <property type="protein sequence ID" value="AT1G54610.1"/>
    <property type="gene ID" value="AT1G54610"/>
</dbReference>
<dbReference type="EnsemblPlants" id="AT1G54610.2">
    <molecule id="Q9ZVM9-1"/>
    <property type="protein sequence ID" value="AT1G54610.2"/>
    <property type="gene ID" value="AT1G54610"/>
</dbReference>
<dbReference type="EnsemblPlants" id="AT1G54610.3">
    <molecule id="Q9ZVM9-1"/>
    <property type="protein sequence ID" value="AT1G54610.3"/>
    <property type="gene ID" value="AT1G54610"/>
</dbReference>
<dbReference type="GeneID" id="841903"/>
<dbReference type="Gramene" id="AT1G54610.1">
    <molecule id="Q9ZVM9-1"/>
    <property type="protein sequence ID" value="AT1G54610.1"/>
    <property type="gene ID" value="AT1G54610"/>
</dbReference>
<dbReference type="Gramene" id="AT1G54610.2">
    <molecule id="Q9ZVM9-1"/>
    <property type="protein sequence ID" value="AT1G54610.2"/>
    <property type="gene ID" value="AT1G54610"/>
</dbReference>
<dbReference type="Gramene" id="AT1G54610.3">
    <molecule id="Q9ZVM9-1"/>
    <property type="protein sequence ID" value="AT1G54610.3"/>
    <property type="gene ID" value="AT1G54610"/>
</dbReference>
<dbReference type="KEGG" id="ath:AT1G54610"/>
<dbReference type="Araport" id="AT1G54610"/>
<dbReference type="TAIR" id="AT1G54610"/>
<dbReference type="eggNOG" id="KOG0600">
    <property type="taxonomic scope" value="Eukaryota"/>
</dbReference>
<dbReference type="InParanoid" id="Q9ZVM9"/>
<dbReference type="OMA" id="YACEPAD"/>
<dbReference type="OrthoDB" id="28397at2759"/>
<dbReference type="PhylomeDB" id="Q9ZVM9"/>
<dbReference type="PRO" id="PR:Q9ZVM9"/>
<dbReference type="Proteomes" id="UP000006548">
    <property type="component" value="Chromosome 1"/>
</dbReference>
<dbReference type="ExpressionAtlas" id="Q9ZVM9">
    <property type="expression patterns" value="baseline and differential"/>
</dbReference>
<dbReference type="GO" id="GO:0005524">
    <property type="term" value="F:ATP binding"/>
    <property type="evidence" value="ECO:0007669"/>
    <property type="project" value="UniProtKB-KW"/>
</dbReference>
<dbReference type="GO" id="GO:0106310">
    <property type="term" value="F:protein serine kinase activity"/>
    <property type="evidence" value="ECO:0007669"/>
    <property type="project" value="RHEA"/>
</dbReference>
<dbReference type="GO" id="GO:0004674">
    <property type="term" value="F:protein serine/threonine kinase activity"/>
    <property type="evidence" value="ECO:0007669"/>
    <property type="project" value="UniProtKB-KW"/>
</dbReference>
<dbReference type="CDD" id="cd07840">
    <property type="entry name" value="STKc_CDK9_like"/>
    <property type="match status" value="1"/>
</dbReference>
<dbReference type="FunFam" id="1.10.510.10:FF:000043">
    <property type="entry name" value="probable serine/threonine-protein kinase At1g54610"/>
    <property type="match status" value="1"/>
</dbReference>
<dbReference type="FunFam" id="3.30.200.20:FF:000021">
    <property type="entry name" value="probable serine/threonine-protein kinase At1g54610"/>
    <property type="match status" value="1"/>
</dbReference>
<dbReference type="Gene3D" id="3.30.200.20">
    <property type="entry name" value="Phosphorylase Kinase, domain 1"/>
    <property type="match status" value="1"/>
</dbReference>
<dbReference type="Gene3D" id="1.10.510.10">
    <property type="entry name" value="Transferase(Phosphotransferase) domain 1"/>
    <property type="match status" value="1"/>
</dbReference>
<dbReference type="InterPro" id="IPR050108">
    <property type="entry name" value="CDK"/>
</dbReference>
<dbReference type="InterPro" id="IPR011009">
    <property type="entry name" value="Kinase-like_dom_sf"/>
</dbReference>
<dbReference type="InterPro" id="IPR000719">
    <property type="entry name" value="Prot_kinase_dom"/>
</dbReference>
<dbReference type="InterPro" id="IPR017441">
    <property type="entry name" value="Protein_kinase_ATP_BS"/>
</dbReference>
<dbReference type="InterPro" id="IPR008271">
    <property type="entry name" value="Ser/Thr_kinase_AS"/>
</dbReference>
<dbReference type="PANTHER" id="PTHR24056">
    <property type="entry name" value="CELL DIVISION PROTEIN KINASE"/>
    <property type="match status" value="1"/>
</dbReference>
<dbReference type="PANTHER" id="PTHR24056:SF529">
    <property type="entry name" value="CYCLIN-DEPENDENT KINASE"/>
    <property type="match status" value="1"/>
</dbReference>
<dbReference type="Pfam" id="PF00069">
    <property type="entry name" value="Pkinase"/>
    <property type="match status" value="1"/>
</dbReference>
<dbReference type="SMART" id="SM00220">
    <property type="entry name" value="S_TKc"/>
    <property type="match status" value="1"/>
</dbReference>
<dbReference type="SUPFAM" id="SSF56112">
    <property type="entry name" value="Protein kinase-like (PK-like)"/>
    <property type="match status" value="1"/>
</dbReference>
<dbReference type="PROSITE" id="PS00107">
    <property type="entry name" value="PROTEIN_KINASE_ATP"/>
    <property type="match status" value="1"/>
</dbReference>
<dbReference type="PROSITE" id="PS50011">
    <property type="entry name" value="PROTEIN_KINASE_DOM"/>
    <property type="match status" value="1"/>
</dbReference>
<dbReference type="PROSITE" id="PS00108">
    <property type="entry name" value="PROTEIN_KINASE_ST"/>
    <property type="match status" value="1"/>
</dbReference>
<gene>
    <name type="ordered locus">At1g54610</name>
    <name type="ORF">T22H22.5</name>
</gene>
<sequence>MGCVFGREAATTTTAEAKQAKSSKASSGVVVVGESSVTKSNGVIADDVEKKKNEEANGDKERKSSKGDRRRSTKPNPRLSNPSKHWRGEQVAAGWPSWLSDACGEALNGWVPRKADTFEKIDKIGQGTYSNVYKAKDMLTGKIVALKKVRFDNLEPESVKFMAREILVLRRLDHPNVVKLEGLVTSRMSCSLYLVFQYMDHDLAGLASSPVVKFSESEVKCLMRQLISGLEHCHSRGVLHRDIKGSNLLIDDGGVLKIADFGLATIFDPNHKRPMTSRVVTLWYRAPELLLGATDYGVGIDLWSAGCILAELLAGRPIMPGRTEVEQLHKIYKLCGSPSEDYWKKGKFTHGAIYKPREPYKRSIRETFKDFPPSSLPLIDALLSIEPEDRQTASAALKSEFFTSEPYACEPADLPKYPPSKEIDAKRRDEETRRQRAASKAQGDGARKNRHRDRSNRALPAPEANAELQSNVDRRRLITHANAKSKSEKFPPPHQDGGAMGVPLGASQHIDPTFIPRDMVPSFTSSSFNFSKDEPPTQVQTWSGPLGHPITGVSRKKKDNTKSSKGKRAVVA</sequence>
<proteinExistence type="evidence at protein level"/>